<reference key="1">
    <citation type="journal article" date="2005" name="Antimicrob. Agents Chemother.">
        <title>Molecular evolution perspectives on intraspecific lateral DNA transfer of topoisomerase and gyrase loci in Streptococcus pneumoniae, with implications for fluoroquinolone resistance development and spread.</title>
        <authorList>
            <person name="Stanhope M.J."/>
            <person name="Walsh S.L."/>
            <person name="Becker J.A."/>
            <person name="Italia M.J."/>
            <person name="Ingraham K.A."/>
            <person name="Gwynn M.N."/>
            <person name="Mathie T."/>
            <person name="Poupard J.A."/>
            <person name="Miller L.A."/>
            <person name="Brown J.R."/>
            <person name="Amrine-Madsen H."/>
        </authorList>
    </citation>
    <scope>NUCLEOTIDE SEQUENCE [GENOMIC DNA]</scope>
    <source>
        <strain>132.1US00S</strain>
        <strain>94.1Nd00S</strain>
    </source>
</reference>
<reference key="2">
    <citation type="journal article" date="2001" name="Science">
        <title>Complete genome sequence of a virulent isolate of Streptococcus pneumoniae.</title>
        <authorList>
            <person name="Tettelin H."/>
            <person name="Nelson K.E."/>
            <person name="Paulsen I.T."/>
            <person name="Eisen J.A."/>
            <person name="Read T.D."/>
            <person name="Peterson S.N."/>
            <person name="Heidelberg J.F."/>
            <person name="DeBoy R.T."/>
            <person name="Haft D.H."/>
            <person name="Dodson R.J."/>
            <person name="Durkin A.S."/>
            <person name="Gwinn M.L."/>
            <person name="Kolonay J.F."/>
            <person name="Nelson W.C."/>
            <person name="Peterson J.D."/>
            <person name="Umayam L.A."/>
            <person name="White O."/>
            <person name="Salzberg S.L."/>
            <person name="Lewis M.R."/>
            <person name="Radune D."/>
            <person name="Holtzapple E.K."/>
            <person name="Khouri H.M."/>
            <person name="Wolf A.M."/>
            <person name="Utterback T.R."/>
            <person name="Hansen C.L."/>
            <person name="McDonald L.A."/>
            <person name="Feldblyum T.V."/>
            <person name="Angiuoli S.V."/>
            <person name="Dickinson T."/>
            <person name="Hickey E.K."/>
            <person name="Holt I.E."/>
            <person name="Loftus B.J."/>
            <person name="Yang F."/>
            <person name="Smith H.O."/>
            <person name="Venter J.C."/>
            <person name="Dougherty B.A."/>
            <person name="Morrison D.A."/>
            <person name="Hollingshead S.K."/>
            <person name="Fraser C.M."/>
        </authorList>
    </citation>
    <scope>NUCLEOTIDE SEQUENCE [LARGE SCALE GENOMIC DNA]</scope>
    <source>
        <strain>ATCC BAA-334 / TIGR4</strain>
    </source>
</reference>
<dbReference type="EC" id="2.4.2.22" evidence="1"/>
<dbReference type="EMBL" id="AE005672">
    <property type="protein sequence ID" value="AAK75919.1"/>
    <property type="molecule type" value="Genomic_DNA"/>
</dbReference>
<dbReference type="EMBL" id="DQ174854">
    <property type="protein sequence ID" value="AAZ92655.1"/>
    <property type="molecule type" value="Genomic_DNA"/>
</dbReference>
<dbReference type="EMBL" id="DQ174892">
    <property type="protein sequence ID" value="AAZ92693.1"/>
    <property type="molecule type" value="Genomic_DNA"/>
</dbReference>
<dbReference type="PIR" id="F95215">
    <property type="entry name" value="F95215"/>
</dbReference>
<dbReference type="RefSeq" id="WP_000770419.1">
    <property type="nucleotide sequence ID" value="NC_003028.3"/>
</dbReference>
<dbReference type="SMR" id="Q97P00"/>
<dbReference type="PaxDb" id="170187-SP_1847"/>
<dbReference type="EnsemblBacteria" id="AAK75919">
    <property type="protein sequence ID" value="AAK75919"/>
    <property type="gene ID" value="SP_1847"/>
</dbReference>
<dbReference type="KEGG" id="spn:SP_1847"/>
<dbReference type="eggNOG" id="COG0503">
    <property type="taxonomic scope" value="Bacteria"/>
</dbReference>
<dbReference type="PhylomeDB" id="Q97P00"/>
<dbReference type="BioCyc" id="SPNE170187:G1FZB-1877-MONOMER"/>
<dbReference type="UniPathway" id="UPA00602">
    <property type="reaction ID" value="UER00658"/>
</dbReference>
<dbReference type="Proteomes" id="UP000000585">
    <property type="component" value="Chromosome"/>
</dbReference>
<dbReference type="GO" id="GO:0005737">
    <property type="term" value="C:cytoplasm"/>
    <property type="evidence" value="ECO:0007669"/>
    <property type="project" value="UniProtKB-SubCell"/>
</dbReference>
<dbReference type="GO" id="GO:0000310">
    <property type="term" value="F:xanthine phosphoribosyltransferase activity"/>
    <property type="evidence" value="ECO:0007669"/>
    <property type="project" value="UniProtKB-UniRule"/>
</dbReference>
<dbReference type="GO" id="GO:0006166">
    <property type="term" value="P:purine ribonucleoside salvage"/>
    <property type="evidence" value="ECO:0007669"/>
    <property type="project" value="UniProtKB-KW"/>
</dbReference>
<dbReference type="GO" id="GO:0046110">
    <property type="term" value="P:xanthine metabolic process"/>
    <property type="evidence" value="ECO:0007669"/>
    <property type="project" value="InterPro"/>
</dbReference>
<dbReference type="GO" id="GO:0032265">
    <property type="term" value="P:XMP salvage"/>
    <property type="evidence" value="ECO:0007669"/>
    <property type="project" value="UniProtKB-UniRule"/>
</dbReference>
<dbReference type="CDD" id="cd06223">
    <property type="entry name" value="PRTases_typeI"/>
    <property type="match status" value="1"/>
</dbReference>
<dbReference type="Gene3D" id="3.40.50.2020">
    <property type="match status" value="1"/>
</dbReference>
<dbReference type="HAMAP" id="MF_01184">
    <property type="entry name" value="XPRTase"/>
    <property type="match status" value="1"/>
</dbReference>
<dbReference type="InterPro" id="IPR000836">
    <property type="entry name" value="PRibTrfase_dom"/>
</dbReference>
<dbReference type="InterPro" id="IPR029057">
    <property type="entry name" value="PRTase-like"/>
</dbReference>
<dbReference type="InterPro" id="IPR050118">
    <property type="entry name" value="Pur/Pyrimidine_PRTase"/>
</dbReference>
<dbReference type="InterPro" id="IPR010079">
    <property type="entry name" value="Xanthine_PRibTrfase"/>
</dbReference>
<dbReference type="NCBIfam" id="NF006671">
    <property type="entry name" value="PRK09219.1"/>
    <property type="match status" value="1"/>
</dbReference>
<dbReference type="NCBIfam" id="TIGR01744">
    <property type="entry name" value="XPRTase"/>
    <property type="match status" value="1"/>
</dbReference>
<dbReference type="PANTHER" id="PTHR43864">
    <property type="entry name" value="HYPOXANTHINE/GUANINE PHOSPHORIBOSYLTRANSFERASE"/>
    <property type="match status" value="1"/>
</dbReference>
<dbReference type="PANTHER" id="PTHR43864:SF1">
    <property type="entry name" value="XANTHINE PHOSPHORIBOSYLTRANSFERASE"/>
    <property type="match status" value="1"/>
</dbReference>
<dbReference type="Pfam" id="PF00156">
    <property type="entry name" value="Pribosyltran"/>
    <property type="match status" value="1"/>
</dbReference>
<dbReference type="SUPFAM" id="SSF53271">
    <property type="entry name" value="PRTase-like"/>
    <property type="match status" value="1"/>
</dbReference>
<evidence type="ECO:0000255" key="1">
    <source>
        <dbReference type="HAMAP-Rule" id="MF_01184"/>
    </source>
</evidence>
<protein>
    <recommendedName>
        <fullName evidence="1">Xanthine phosphoribosyltransferase</fullName>
        <shortName evidence="1">XPRTase</shortName>
        <ecNumber evidence="1">2.4.2.22</ecNumber>
    </recommendedName>
</protein>
<proteinExistence type="inferred from homology"/>
<organism>
    <name type="scientific">Streptococcus pneumoniae serotype 4 (strain ATCC BAA-334 / TIGR4)</name>
    <dbReference type="NCBI Taxonomy" id="170187"/>
    <lineage>
        <taxon>Bacteria</taxon>
        <taxon>Bacillati</taxon>
        <taxon>Bacillota</taxon>
        <taxon>Bacilli</taxon>
        <taxon>Lactobacillales</taxon>
        <taxon>Streptococcaceae</taxon>
        <taxon>Streptococcus</taxon>
    </lineage>
</organism>
<gene>
    <name evidence="1" type="primary">xpt</name>
    <name type="ordered locus">SP_1847</name>
</gene>
<feature type="chain" id="PRO_0000339763" description="Xanthine phosphoribosyltransferase">
    <location>
        <begin position="1"/>
        <end position="193"/>
    </location>
</feature>
<feature type="binding site" evidence="1">
    <location>
        <position position="20"/>
    </location>
    <ligand>
        <name>xanthine</name>
        <dbReference type="ChEBI" id="CHEBI:17712"/>
    </ligand>
</feature>
<feature type="binding site" evidence="1">
    <location>
        <position position="27"/>
    </location>
    <ligand>
        <name>xanthine</name>
        <dbReference type="ChEBI" id="CHEBI:17712"/>
    </ligand>
</feature>
<feature type="binding site" evidence="1">
    <location>
        <begin position="128"/>
        <end position="132"/>
    </location>
    <ligand>
        <name>5-phospho-alpha-D-ribose 1-diphosphate</name>
        <dbReference type="ChEBI" id="CHEBI:58017"/>
    </ligand>
</feature>
<feature type="binding site" evidence="1">
    <location>
        <position position="156"/>
    </location>
    <ligand>
        <name>xanthine</name>
        <dbReference type="ChEBI" id="CHEBI:17712"/>
    </ligand>
</feature>
<comment type="function">
    <text evidence="1">Converts the preformed base xanthine, a product of nucleic acid breakdown, to xanthosine 5'-monophosphate (XMP), so it can be reused for RNA or DNA synthesis.</text>
</comment>
<comment type="catalytic activity">
    <reaction evidence="1">
        <text>XMP + diphosphate = xanthine + 5-phospho-alpha-D-ribose 1-diphosphate</text>
        <dbReference type="Rhea" id="RHEA:10800"/>
        <dbReference type="ChEBI" id="CHEBI:17712"/>
        <dbReference type="ChEBI" id="CHEBI:33019"/>
        <dbReference type="ChEBI" id="CHEBI:57464"/>
        <dbReference type="ChEBI" id="CHEBI:58017"/>
        <dbReference type="EC" id="2.4.2.22"/>
    </reaction>
</comment>
<comment type="pathway">
    <text evidence="1">Purine metabolism; XMP biosynthesis via salvage pathway; XMP from xanthine: step 1/1.</text>
</comment>
<comment type="subunit">
    <text evidence="1">Homodimer.</text>
</comment>
<comment type="subcellular location">
    <subcellularLocation>
        <location evidence="1">Cytoplasm</location>
    </subcellularLocation>
</comment>
<comment type="similarity">
    <text evidence="1">Belongs to the purine/pyrimidine phosphoribosyltransferase family. Xpt subfamily.</text>
</comment>
<sequence>MKLLEERILKDGHILGDNILKVDSFLTHQVDFSLMREIGKVFAEKFATTGITKVVTIEASGIAPAVFTAEALNVPMIFAKKAKNITMNEGILTAQVYSFTKQVTSTVSIAEKFLSPEDKVLIIDDFLANGQAAKGLIQIIEQAGATVQAIGIVIEKSFQDGRDLLEKAGYPVLSLARLDCFENGQVVFKEADL</sequence>
<name>XPT_STRPN</name>
<accession>Q97P00</accession>
<keyword id="KW-0963">Cytoplasm</keyword>
<keyword id="KW-0328">Glycosyltransferase</keyword>
<keyword id="KW-0660">Purine salvage</keyword>
<keyword id="KW-1185">Reference proteome</keyword>
<keyword id="KW-0808">Transferase</keyword>